<accession>B2RU80</accession>
<accession>Q3UGZ7</accession>
<accession>Q8CIW2</accession>
<name>PTPRB_MOUSE</name>
<comment type="function">
    <text evidence="7 9 10 11 12 13 15">Plays an important role in blood vessel remodeling and angiogenesis (PubMed:26773517). Not necessary for the initial formation of blood vessels, but is essential for their maintenance and remodeling. Can induce dephosphorylation of TEK/TIE2, CDH5/VE-cadherin and KDR/VEGFR-2. Regulates angiopoietin-TIE2 signaling in endothelial cells. Acts as a negative regulator of TIE2, and controls TIE2 driven endothelial cell proliferation, which in turn affects blood vessel remodeling during embryonic development and determines blood vessel size during perinatal growth. Essential for the maintenance of endothelial cell contact integrity and for the adhesive function of VE-cadherin in endothelial cells and this requires the presence of plakoglobin.</text>
</comment>
<comment type="catalytic activity">
    <reaction evidence="6">
        <text>O-phospho-L-tyrosyl-[protein] + H2O = L-tyrosyl-[protein] + phosphate</text>
        <dbReference type="Rhea" id="RHEA:10684"/>
        <dbReference type="Rhea" id="RHEA-COMP:10136"/>
        <dbReference type="Rhea" id="RHEA-COMP:20101"/>
        <dbReference type="ChEBI" id="CHEBI:15377"/>
        <dbReference type="ChEBI" id="CHEBI:43474"/>
        <dbReference type="ChEBI" id="CHEBI:46858"/>
        <dbReference type="ChEBI" id="CHEBI:61978"/>
        <dbReference type="EC" id="3.1.3.48"/>
    </reaction>
</comment>
<comment type="subunit">
    <text evidence="2 7 8 9 12 13 14 15">Monomer (By similarity). Interacts with TEK (PubMed:10557082, PubMed:19451274). Interacts via fibronectin type-III 17 domain with CDH5 (PubMed:19015309). Detected in a complex with CNTN1 and NRCAM (PubMed:11564762). Interacts (phosphorylated form) with FYN and GRB2 (PubMed:20398064). Interacts with IGFBP2 (PubMed:26773517).</text>
</comment>
<comment type="subcellular location">
    <subcellularLocation>
        <location evidence="16">Membrane</location>
        <topology evidence="16">Single-pass type I membrane protein</topology>
    </subcellularLocation>
</comment>
<comment type="tissue specificity">
    <text evidence="7 10 11">Expression is very high in the vasculature of lung, spleen, and kidney, as well as in the heart valves, and is also present in the endothelium of arterioles and venules. Also expressed in tumor vasculature.</text>
</comment>
<comment type="developmental stage">
    <text evidence="7 10 11">Expressed in both arterial and venous vascular endothelium in embryos, although more strongly in arterial vessels. Highly expressed in the developing outflow tract of the heart and later is expressed in developing heart valves.</text>
</comment>
<comment type="disruption phenotype">
    <text evidence="11">Mice show severe cardiovascular defects and embryonic lethality by 10 dpc. Vasculogenesis occurs normally however, angiogenesis is abnormal. Angiogenic defects are most pronounced in the yolk sac and include a complete failure to elaborate the primitive vascular scaffold into higher-order branched arteries, veins, and capillaries.</text>
</comment>
<comment type="similarity">
    <text evidence="16">Belongs to the protein-tyrosine phosphatase family. Receptor class 3 subfamily.</text>
</comment>
<evidence type="ECO:0000250" key="1"/>
<evidence type="ECO:0000250" key="2">
    <source>
        <dbReference type="UniProtKB" id="P23467"/>
    </source>
</evidence>
<evidence type="ECO:0000255" key="3"/>
<evidence type="ECO:0000255" key="4">
    <source>
        <dbReference type="PROSITE-ProRule" id="PRU00160"/>
    </source>
</evidence>
<evidence type="ECO:0000255" key="5">
    <source>
        <dbReference type="PROSITE-ProRule" id="PRU00316"/>
    </source>
</evidence>
<evidence type="ECO:0000255" key="6">
    <source>
        <dbReference type="PROSITE-ProRule" id="PRU10044"/>
    </source>
</evidence>
<evidence type="ECO:0000269" key="7">
    <source>
    </source>
</evidence>
<evidence type="ECO:0000269" key="8">
    <source>
    </source>
</evidence>
<evidence type="ECO:0000269" key="9">
    <source>
    </source>
</evidence>
<evidence type="ECO:0000269" key="10">
    <source>
    </source>
</evidence>
<evidence type="ECO:0000269" key="11">
    <source>
    </source>
</evidence>
<evidence type="ECO:0000269" key="12">
    <source>
    </source>
</evidence>
<evidence type="ECO:0000269" key="13">
    <source>
    </source>
</evidence>
<evidence type="ECO:0000269" key="14">
    <source>
    </source>
</evidence>
<evidence type="ECO:0000269" key="15">
    <source>
    </source>
</evidence>
<evidence type="ECO:0000305" key="16"/>
<dbReference type="EC" id="3.1.3.48"/>
<dbReference type="EMBL" id="AY077755">
    <property type="protein sequence ID" value="AAL75813.1"/>
    <property type="molecule type" value="mRNA"/>
</dbReference>
<dbReference type="EMBL" id="AK147439">
    <property type="protein sequence ID" value="BAE27912.1"/>
    <property type="molecule type" value="mRNA"/>
</dbReference>
<dbReference type="EMBL" id="AK147668">
    <property type="protein sequence ID" value="BAE28060.1"/>
    <property type="molecule type" value="mRNA"/>
</dbReference>
<dbReference type="EMBL" id="CH466539">
    <property type="protein sequence ID" value="EDL21786.1"/>
    <property type="molecule type" value="Genomic_DNA"/>
</dbReference>
<dbReference type="EMBL" id="BC141006">
    <property type="protein sequence ID" value="AAI41007.1"/>
    <property type="molecule type" value="mRNA"/>
</dbReference>
<dbReference type="EMBL" id="BC145111">
    <property type="protein sequence ID" value="AAI45112.1"/>
    <property type="molecule type" value="mRNA"/>
</dbReference>
<dbReference type="CCDS" id="CCDS36063.1"/>
<dbReference type="RefSeq" id="NP_084204.2">
    <property type="nucleotide sequence ID" value="NM_029928.2"/>
</dbReference>
<dbReference type="SMR" id="B2RU80"/>
<dbReference type="BioGRID" id="202492">
    <property type="interactions" value="15"/>
</dbReference>
<dbReference type="CORUM" id="B2RU80"/>
<dbReference type="FunCoup" id="B2RU80">
    <property type="interactions" value="62"/>
</dbReference>
<dbReference type="IntAct" id="B2RU80">
    <property type="interactions" value="2"/>
</dbReference>
<dbReference type="MINT" id="B2RU80"/>
<dbReference type="STRING" id="10090.ENSMUSP00000089805"/>
<dbReference type="GlyCosmos" id="B2RU80">
    <property type="glycosylation" value="23 sites, No reported glycans"/>
</dbReference>
<dbReference type="GlyGen" id="B2RU80">
    <property type="glycosylation" value="25 sites, 4 N-linked glycans (6 sites)"/>
</dbReference>
<dbReference type="iPTMnet" id="B2RU80"/>
<dbReference type="PhosphoSitePlus" id="B2RU80"/>
<dbReference type="jPOST" id="B2RU80"/>
<dbReference type="PaxDb" id="10090-ENSMUSP00000089805"/>
<dbReference type="PeptideAtlas" id="B2RU80"/>
<dbReference type="ProteomicsDB" id="301917"/>
<dbReference type="Antibodypedia" id="29475">
    <property type="antibodies" value="110 antibodies from 24 providers"/>
</dbReference>
<dbReference type="DNASU" id="19263"/>
<dbReference type="Ensembl" id="ENSMUST00000092167.7">
    <property type="protein sequence ID" value="ENSMUSP00000089805.6"/>
    <property type="gene ID" value="ENSMUSG00000020154.11"/>
</dbReference>
<dbReference type="GeneID" id="19263"/>
<dbReference type="KEGG" id="mmu:19263"/>
<dbReference type="UCSC" id="uc007hbv.2">
    <property type="organism name" value="mouse"/>
</dbReference>
<dbReference type="AGR" id="MGI:97809"/>
<dbReference type="CTD" id="5787"/>
<dbReference type="MGI" id="MGI:97809">
    <property type="gene designation" value="Ptprb"/>
</dbReference>
<dbReference type="VEuPathDB" id="HostDB:ENSMUSG00000020154"/>
<dbReference type="eggNOG" id="KOG0791">
    <property type="taxonomic scope" value="Eukaryota"/>
</dbReference>
<dbReference type="GeneTree" id="ENSGT00940000156088"/>
<dbReference type="HOGENOM" id="CLU_000787_0_0_1"/>
<dbReference type="InParanoid" id="B2RU80"/>
<dbReference type="OMA" id="HLRTGQC"/>
<dbReference type="OrthoDB" id="10057517at2759"/>
<dbReference type="PhylomeDB" id="B2RU80"/>
<dbReference type="TreeFam" id="TF351926"/>
<dbReference type="Reactome" id="R-MMU-6798695">
    <property type="pathway name" value="Neutrophil degranulation"/>
</dbReference>
<dbReference type="BioGRID-ORCS" id="19263">
    <property type="hits" value="2 hits in 79 CRISPR screens"/>
</dbReference>
<dbReference type="ChiTaRS" id="Ptprb">
    <property type="organism name" value="mouse"/>
</dbReference>
<dbReference type="PRO" id="PR:B2RU80"/>
<dbReference type="Proteomes" id="UP000000589">
    <property type="component" value="Chromosome 10"/>
</dbReference>
<dbReference type="RNAct" id="B2RU80">
    <property type="molecule type" value="protein"/>
</dbReference>
<dbReference type="Bgee" id="ENSMUSG00000020154">
    <property type="expression patterns" value="Expressed in right lung and 230 other cell types or tissues"/>
</dbReference>
<dbReference type="ExpressionAtlas" id="B2RU80">
    <property type="expression patterns" value="baseline and differential"/>
</dbReference>
<dbReference type="GO" id="GO:0016020">
    <property type="term" value="C:membrane"/>
    <property type="evidence" value="ECO:0007669"/>
    <property type="project" value="UniProtKB-SubCell"/>
</dbReference>
<dbReference type="GO" id="GO:0043235">
    <property type="term" value="C:receptor complex"/>
    <property type="evidence" value="ECO:0000266"/>
    <property type="project" value="MGI"/>
</dbReference>
<dbReference type="GO" id="GO:0045296">
    <property type="term" value="F:cadherin binding"/>
    <property type="evidence" value="ECO:0007669"/>
    <property type="project" value="Ensembl"/>
</dbReference>
<dbReference type="GO" id="GO:0004725">
    <property type="term" value="F:protein tyrosine phosphatase activity"/>
    <property type="evidence" value="ECO:0007669"/>
    <property type="project" value="UniProtKB-EC"/>
</dbReference>
<dbReference type="GO" id="GO:0001525">
    <property type="term" value="P:angiogenesis"/>
    <property type="evidence" value="ECO:0000314"/>
    <property type="project" value="UniProtKB"/>
</dbReference>
<dbReference type="GO" id="GO:0016311">
    <property type="term" value="P:dephosphorylation"/>
    <property type="evidence" value="ECO:0000314"/>
    <property type="project" value="UniProtKB"/>
</dbReference>
<dbReference type="GO" id="GO:0008347">
    <property type="term" value="P:glial cell migration"/>
    <property type="evidence" value="ECO:0007669"/>
    <property type="project" value="Ensembl"/>
</dbReference>
<dbReference type="GO" id="GO:0001649">
    <property type="term" value="P:osteoblast differentiation"/>
    <property type="evidence" value="ECO:0007669"/>
    <property type="project" value="Ensembl"/>
</dbReference>
<dbReference type="GO" id="GO:1990264">
    <property type="term" value="P:peptidyl-tyrosine dephosphorylation involved in inactivation of protein kinase activity"/>
    <property type="evidence" value="ECO:0000314"/>
    <property type="project" value="CACAO"/>
</dbReference>
<dbReference type="CDD" id="cd00063">
    <property type="entry name" value="FN3"/>
    <property type="match status" value="12"/>
</dbReference>
<dbReference type="CDD" id="cd14617">
    <property type="entry name" value="R-PTPc-B"/>
    <property type="match status" value="1"/>
</dbReference>
<dbReference type="FunFam" id="2.60.40.10:FF:000369">
    <property type="entry name" value="Protein tyrosine phosphatase, receptor type B"/>
    <property type="match status" value="11"/>
</dbReference>
<dbReference type="FunFam" id="2.60.40.10:FF:001376">
    <property type="entry name" value="Protein tyrosine phosphatase, receptor type B"/>
    <property type="match status" value="1"/>
</dbReference>
<dbReference type="FunFam" id="2.60.40.10:FF:001778">
    <property type="entry name" value="Protein tyrosine phosphatase, receptor type B"/>
    <property type="match status" value="1"/>
</dbReference>
<dbReference type="FunFam" id="3.90.190.10:FF:000009">
    <property type="entry name" value="Receptor-type tyrosine-protein phosphatase beta"/>
    <property type="match status" value="1"/>
</dbReference>
<dbReference type="FunFam" id="2.60.40.10:FF:001331">
    <property type="entry name" value="receptor-type tyrosine-protein phosphatase beta isoform X2"/>
    <property type="match status" value="1"/>
</dbReference>
<dbReference type="FunFam" id="2.60.40.10:FF:002278">
    <property type="entry name" value="receptor-type tyrosine-protein phosphatase beta isoform X2"/>
    <property type="match status" value="1"/>
</dbReference>
<dbReference type="Gene3D" id="2.60.40.10">
    <property type="entry name" value="Immunoglobulins"/>
    <property type="match status" value="15"/>
</dbReference>
<dbReference type="Gene3D" id="3.90.190.10">
    <property type="entry name" value="Protein tyrosine phosphatase superfamily"/>
    <property type="match status" value="1"/>
</dbReference>
<dbReference type="InterPro" id="IPR003961">
    <property type="entry name" value="FN3_dom"/>
</dbReference>
<dbReference type="InterPro" id="IPR036116">
    <property type="entry name" value="FN3_sf"/>
</dbReference>
<dbReference type="InterPro" id="IPR013783">
    <property type="entry name" value="Ig-like_fold"/>
</dbReference>
<dbReference type="InterPro" id="IPR029021">
    <property type="entry name" value="Prot-tyrosine_phosphatase-like"/>
</dbReference>
<dbReference type="InterPro" id="IPR000242">
    <property type="entry name" value="PTP_cat"/>
</dbReference>
<dbReference type="InterPro" id="IPR041201">
    <property type="entry name" value="PTPRJ_TM"/>
</dbReference>
<dbReference type="InterPro" id="IPR050713">
    <property type="entry name" value="RTP_Phos/Ushers"/>
</dbReference>
<dbReference type="InterPro" id="IPR016130">
    <property type="entry name" value="Tyr_Pase_AS"/>
</dbReference>
<dbReference type="InterPro" id="IPR003595">
    <property type="entry name" value="Tyr_Pase_cat"/>
</dbReference>
<dbReference type="InterPro" id="IPR000387">
    <property type="entry name" value="Tyr_Pase_dom"/>
</dbReference>
<dbReference type="PANTHER" id="PTHR46957">
    <property type="entry name" value="CYTOKINE RECEPTOR"/>
    <property type="match status" value="1"/>
</dbReference>
<dbReference type="PANTHER" id="PTHR46957:SF2">
    <property type="entry name" value="RECEPTOR-TYPE TYROSINE-PROTEIN PHOSPHATASE BETA"/>
    <property type="match status" value="1"/>
</dbReference>
<dbReference type="Pfam" id="PF00041">
    <property type="entry name" value="fn3"/>
    <property type="match status" value="15"/>
</dbReference>
<dbReference type="Pfam" id="PF18861">
    <property type="entry name" value="PTP_tm"/>
    <property type="match status" value="1"/>
</dbReference>
<dbReference type="Pfam" id="PF00102">
    <property type="entry name" value="Y_phosphatase"/>
    <property type="match status" value="1"/>
</dbReference>
<dbReference type="PRINTS" id="PR00700">
    <property type="entry name" value="PRTYPHPHTASE"/>
</dbReference>
<dbReference type="SMART" id="SM00060">
    <property type="entry name" value="FN3"/>
    <property type="match status" value="16"/>
</dbReference>
<dbReference type="SMART" id="SM00194">
    <property type="entry name" value="PTPc"/>
    <property type="match status" value="1"/>
</dbReference>
<dbReference type="SMART" id="SM00404">
    <property type="entry name" value="PTPc_motif"/>
    <property type="match status" value="1"/>
</dbReference>
<dbReference type="SUPFAM" id="SSF52799">
    <property type="entry name" value="(Phosphotyrosine protein) phosphatases II"/>
    <property type="match status" value="1"/>
</dbReference>
<dbReference type="SUPFAM" id="SSF49265">
    <property type="entry name" value="Fibronectin type III"/>
    <property type="match status" value="16"/>
</dbReference>
<dbReference type="PROSITE" id="PS50853">
    <property type="entry name" value="FN3"/>
    <property type="match status" value="12"/>
</dbReference>
<dbReference type="PROSITE" id="PS00383">
    <property type="entry name" value="TYR_PHOSPHATASE_1"/>
    <property type="match status" value="1"/>
</dbReference>
<dbReference type="PROSITE" id="PS50056">
    <property type="entry name" value="TYR_PHOSPHATASE_2"/>
    <property type="match status" value="1"/>
</dbReference>
<dbReference type="PROSITE" id="PS50055">
    <property type="entry name" value="TYR_PHOSPHATASE_PTP"/>
    <property type="match status" value="1"/>
</dbReference>
<proteinExistence type="evidence at protein level"/>
<protein>
    <recommendedName>
        <fullName>Receptor-type tyrosine-protein phosphatase beta</fullName>
        <shortName>Protein-tyrosine phosphatase beta</shortName>
        <shortName>R-PTP-beta</shortName>
        <ecNumber>3.1.3.48</ecNumber>
    </recommendedName>
    <alternativeName>
        <fullName>Vascular endothelial protein tyrosine phosphatase</fullName>
        <shortName>VE-PTP</shortName>
    </alternativeName>
</protein>
<feature type="signal peptide" evidence="3">
    <location>
        <begin position="1"/>
        <end position="22"/>
    </location>
</feature>
<feature type="chain" id="PRO_0000390401" description="Receptor-type tyrosine-protein phosphatase beta">
    <location>
        <begin position="23"/>
        <end position="1998"/>
    </location>
</feature>
<feature type="topological domain" description="Extracellular" evidence="3">
    <location>
        <begin position="23"/>
        <end position="1622"/>
    </location>
</feature>
<feature type="transmembrane region" description="Helical" evidence="3">
    <location>
        <begin position="1623"/>
        <end position="1643"/>
    </location>
</feature>
<feature type="topological domain" description="Cytoplasmic" evidence="3">
    <location>
        <begin position="1644"/>
        <end position="1997"/>
    </location>
</feature>
<feature type="domain" description="Fibronectin type-III 1" evidence="5">
    <location>
        <begin position="23"/>
        <end position="109"/>
    </location>
</feature>
<feature type="domain" description="Fibronectin type-III 2" evidence="5">
    <location>
        <begin position="113"/>
        <end position="206"/>
    </location>
</feature>
<feature type="domain" description="Fibronectin type-III 3" evidence="5">
    <location>
        <begin position="207"/>
        <end position="291"/>
    </location>
</feature>
<feature type="domain" description="Fibronectin type-III 4" evidence="5">
    <location>
        <begin position="292"/>
        <end position="384"/>
    </location>
</feature>
<feature type="domain" description="Fibronectin type-III 5" evidence="5">
    <location>
        <begin position="378"/>
        <end position="466"/>
    </location>
</feature>
<feature type="domain" description="Fibronectin type-III 6" evidence="5">
    <location>
        <begin position="470"/>
        <end position="556"/>
    </location>
</feature>
<feature type="domain" description="Fibronectin type-III 7" evidence="5">
    <location>
        <begin position="557"/>
        <end position="642"/>
    </location>
</feature>
<feature type="domain" description="Fibronectin type-III 8" evidence="5">
    <location>
        <begin position="643"/>
        <end position="733"/>
    </location>
</feature>
<feature type="domain" description="Fibronectin type-III 9" evidence="5">
    <location>
        <begin position="734"/>
        <end position="821"/>
    </location>
</feature>
<feature type="domain" description="Fibronectin type-III 10" evidence="5">
    <location>
        <begin position="822"/>
        <end position="913"/>
    </location>
</feature>
<feature type="domain" description="Fibronectin type-III 11" evidence="5">
    <location>
        <begin position="908"/>
        <end position="994"/>
    </location>
</feature>
<feature type="domain" description="Fibronectin type-III 12" evidence="5">
    <location>
        <begin position="995"/>
        <end position="1088"/>
    </location>
</feature>
<feature type="domain" description="Fibronectin type-III 13" evidence="5">
    <location>
        <begin position="1086"/>
        <end position="1173"/>
    </location>
</feature>
<feature type="domain" description="Fibronectin type-III 14" evidence="5">
    <location>
        <begin position="1176"/>
        <end position="1263"/>
    </location>
</feature>
<feature type="domain" description="Fibronectin type-III 15" evidence="5">
    <location>
        <begin position="1264"/>
        <end position="1357"/>
    </location>
</feature>
<feature type="domain" description="Fibronectin type-III 16" evidence="5">
    <location>
        <begin position="1358"/>
        <end position="1449"/>
    </location>
</feature>
<feature type="domain" description="Fibronectin type-III 17" evidence="5">
    <location>
        <begin position="1449"/>
        <end position="1551"/>
    </location>
</feature>
<feature type="domain" description="Tyrosine-protein phosphatase" evidence="4">
    <location>
        <begin position="1704"/>
        <end position="1964"/>
    </location>
</feature>
<feature type="active site" description="Phosphocysteine intermediate" evidence="4 6">
    <location>
        <position position="1905"/>
    </location>
</feature>
<feature type="binding site" evidence="1">
    <location>
        <position position="1871"/>
    </location>
    <ligand>
        <name>substrate</name>
    </ligand>
</feature>
<feature type="binding site" evidence="1">
    <location>
        <begin position="1905"/>
        <end position="1911"/>
    </location>
    <ligand>
        <name>substrate</name>
    </ligand>
</feature>
<feature type="binding site" evidence="1">
    <location>
        <position position="1949"/>
    </location>
    <ligand>
        <name>substrate</name>
    </ligand>
</feature>
<feature type="modified residue" description="Phosphotyrosine" evidence="14">
    <location>
        <position position="1982"/>
    </location>
</feature>
<feature type="glycosylation site" description="N-linked (GlcNAc...) asparagine" evidence="3">
    <location>
        <position position="28"/>
    </location>
</feature>
<feature type="glycosylation site" description="N-linked (GlcNAc...) asparagine" evidence="3">
    <location>
        <position position="53"/>
    </location>
</feature>
<feature type="glycosylation site" description="N-linked (GlcNAc...) asparagine" evidence="3">
    <location>
        <position position="75"/>
    </location>
</feature>
<feature type="glycosylation site" description="N-linked (GlcNAc...) asparagine" evidence="3">
    <location>
        <position position="173"/>
    </location>
</feature>
<feature type="glycosylation site" description="N-linked (GlcNAc...) asparagine" evidence="3">
    <location>
        <position position="199"/>
    </location>
</feature>
<feature type="glycosylation site" description="N-linked (GlcNAc...) asparagine" evidence="3">
    <location>
        <position position="268"/>
    </location>
</feature>
<feature type="glycosylation site" description="N-linked (GlcNAc...) asparagine" evidence="3">
    <location>
        <position position="415"/>
    </location>
</feature>
<feature type="glycosylation site" description="N-linked (GlcNAc...) asparagine" evidence="3">
    <location>
        <position position="422"/>
    </location>
</feature>
<feature type="glycosylation site" description="N-linked (GlcNAc...) asparagine" evidence="3">
    <location>
        <position position="480"/>
    </location>
</feature>
<feature type="glycosylation site" description="N-linked (GlcNAc...) asparagine" evidence="3">
    <location>
        <position position="575"/>
    </location>
</feature>
<feature type="glycosylation site" description="N-linked (GlcNAc...) asparagine" evidence="3">
    <location>
        <position position="599"/>
    </location>
</feature>
<feature type="glycosylation site" description="N-linked (GlcNAc...) asparagine" evidence="3">
    <location>
        <position position="653"/>
    </location>
</feature>
<feature type="glycosylation site" description="N-linked (GlcNAc...) asparagine" evidence="3">
    <location>
        <position position="830"/>
    </location>
</feature>
<feature type="glycosylation site" description="N-linked (GlcNAc...) asparagine" evidence="3">
    <location>
        <position position="1041"/>
    </location>
</feature>
<feature type="glycosylation site" description="N-linked (GlcNAc...) asparagine" evidence="3">
    <location>
        <position position="1097"/>
    </location>
</feature>
<feature type="glycosylation site" description="N-linked (GlcNAc...) asparagine" evidence="3">
    <location>
        <position position="1164"/>
    </location>
</feature>
<feature type="glycosylation site" description="N-linked (GlcNAc...) asparagine" evidence="3">
    <location>
        <position position="1186"/>
    </location>
</feature>
<feature type="glycosylation site" description="N-linked (GlcNAc...) asparagine" evidence="3">
    <location>
        <position position="1213"/>
    </location>
</feature>
<feature type="glycosylation site" description="N-linked (GlcNAc...) asparagine" evidence="3">
    <location>
        <position position="1275"/>
    </location>
</feature>
<feature type="glycosylation site" description="N-linked (GlcNAc...) asparagine" evidence="3">
    <location>
        <position position="1368"/>
    </location>
</feature>
<feature type="glycosylation site" description="N-linked (GlcNAc...) asparagine" evidence="3">
    <location>
        <position position="1471"/>
    </location>
</feature>
<feature type="glycosylation site" description="N-linked (GlcNAc...) asparagine" evidence="3">
    <location>
        <position position="1475"/>
    </location>
</feature>
<feature type="glycosylation site" description="N-linked (GlcNAc...) asparagine" evidence="3">
    <location>
        <position position="1519"/>
    </location>
</feature>
<feature type="mutagenesis site" description="Loss of activity and dephosphorylation of CDH5." evidence="9">
    <original>R</original>
    <variation>A</variation>
    <location>
        <position position="1911"/>
    </location>
</feature>
<feature type="mutagenesis site" description="Loss of tyrosine phosphorylation. Abolishes interaction with FYN and GRB2." evidence="14">
    <original>Y</original>
    <variation>F</variation>
    <location>
        <position position="1982"/>
    </location>
</feature>
<feature type="sequence conflict" description="In Ref. 3; BAE28060/BAE27912." evidence="16" ref="3">
    <original>V</original>
    <variation>A</variation>
    <location>
        <position position="647"/>
    </location>
</feature>
<feature type="sequence conflict" description="In Ref. 1; AAL75813." evidence="16" ref="1">
    <original>T</original>
    <variation>P</variation>
    <location>
        <position position="906"/>
    </location>
</feature>
<feature type="sequence conflict" description="In Ref. 3; BAE28060/BAE27912." evidence="16" ref="3">
    <original>L</original>
    <variation>F</variation>
    <location>
        <position position="1037"/>
    </location>
</feature>
<feature type="sequence conflict" description="In Ref. 3; BAE28060/BAE27912." evidence="16" ref="3">
    <original>I</original>
    <variation>V</variation>
    <location>
        <position position="1168"/>
    </location>
</feature>
<feature type="sequence conflict" description="In Ref. 1; AAL75813." evidence="16" ref="1">
    <original>C</original>
    <variation>S</variation>
    <location>
        <position position="1748"/>
    </location>
</feature>
<gene>
    <name type="primary">Ptprb</name>
</gene>
<sequence length="1998" mass="224495">MLRHGALTALWITLSVVQTGVAEQVKCNFTLLESRVSSLSASIQWRTFASPCNFSLIYSSDTSGPMWCHPIRIDNFTYGCNPKDLQAGTVYNFRIVSLDGEESTLVLQTDPLPPARFEVNREKTASTTLQVRWTPSSGKVSWYEVQLFDHNNQKIQEVQVQESTTWSQYTFLNLTEGNSYKVAITAVSGEKRSFPVYINGSTVPSPVKDLGISPNPNSLLISWSRGSGNVEQYRLVLMDKGAIVQDTNVDRRDTSYAFHELTPGHLYNLTIVTMASGLQNSRWKLVRTAPMEVSNLKVTNDGRLTSLNVKWQKPPGDVDSYSITLSHQGTIKESKTLAPPVTETQFKDLVPGRLYQVTISCISGELSAEKSAAGRTVPEKVRNLVSYNEIWMKSFTVNWTPPAGDWEHYRIVLFNESLVLLNTTVGKEETHYALDGLELIPGRQYEIEVIVESGNLRNSERCQGRTVPLAVLQLRVKHANETSLGITWRAPLGEWEKYIISLMDRELLVIHKSLSKDAKEFTFTDLMPGRNYKATVTSMSGDLKQSSSIKGRTVPAQVTDLHVNNQGMTSSLFTNWTKALGDVEFYQVLLIHENVVVKNESVSSDTSRYSFRALKPGSLYSVVVTTVSGGISSRQVVAEGRTVPSSVSGVTVNNSGRNDYLSVSWLPAPGEVDHYVVSLSHEGKVDQFLIIAKSVSECSFSSLTPGRLYNVTVTTKSGNYASHSFTEERTVPDKVQGISVSNSARSDYLKVSWVHATGDFDHYEVTIKNRESFIQTKTIPKSENECEFIELVPGRLYSVTVSTKSGQYEASEQGTGRTIPEPVKDLTLLNRSTEDLHVTWSRANGDVDQYEVQLLFNDMKVFPHIHLVNTATEYKFTALTPGRHYKILVLTISGDVQQSAFIEGLTVPSTVKNIHISANGATDRLMVTWSPGGGDVDSYVVSAFRQDEKVDSQTIPKHASEHTFHRLEAGAKYRIAIVSVSGSLRNQIDALGQTVPASVQGVVAANAYSSNSLTVSWQKALGVAERYDILLLNENGLLLSNVSEPATARQHKFEDLTPGKKYKMQILTVSGGLFSKESQAEGRTVPAAVTNLRITENSSRYLSFGWTASEGELSWYNIFLYNPDRTLQERAQVDPLVQSFSFQNLLQGRMYKMVIVTHSGELSNESFIFGRTVPAAVNHLKGSHRNTTDSLWFSWSPASGDFDFYELILYNPNGTKKENWKEKDVTEWRFQGLVPGRKYTLYVVTHSGDLSNKVTGEGRTAPSPPSLLSFADVANTSLAITWKGPPDWTDYNDFELQWFPGDALTIFNPYSSRKSEGRIVYGLHPGRSYQFSVKTVSGDSWKTYSKPISGSVRTKPDKIQNLHCRPQNSTAIACSWIPPDSDFDGYSIECRKMDTQEIEFSRKLEKEKSLLNIMMLVPHKRYLVSIKVQSAGMTSEVVEDSTITMIDRPPQPPPHIRVNEKDVLISKSSINFTVNCSWFSDTNGAVKYFAVVVREADSMDELKPEQQHPLPSYLEYRHNASIRVYQTNYFASKCAESPDSSSKSFNIKLGAEMDSLGGKCDPSQQKFCDGPLKPHTAYRISIRAFTQLFDEDLKEFTKPLYSDTFFSMPITTESEPLFGVIEGVSAGLFLIGMLVALVAFFICRQKASHSRERPSARLSIRRDRPLSVHLNLGQKGNRKTSCPIKINQFEGHFMKLQADSNYLLSKEYEDLKDVGRSQSCDIALLPENRGKNRYNNILPYDASRVKLCNVDDDPCSDYINASYIPGNNFRREYIATQGPLPGTKDDFWKMAWEQNVHNIVMVTQCVEKGRVKCDHYWPADQDPLYYGDLILQMVSESVLPEWTIREFKICSEEQLDAHRLIRHFHYTVWPDHGVPETTQSLIQFVRTVRDYINRSPGAGPTVVHCSAGVGRTGTFVALDRILQQLDSKDSVDIYGAVHDLRLHRVHMVQTECQYVYLHQCVRDVLRAKKLRNEQENPLFPIYENVNPEYHRDAIYSRH</sequence>
<keyword id="KW-0037">Angiogenesis</keyword>
<keyword id="KW-0325">Glycoprotein</keyword>
<keyword id="KW-0378">Hydrolase</keyword>
<keyword id="KW-0472">Membrane</keyword>
<keyword id="KW-0597">Phosphoprotein</keyword>
<keyword id="KW-0904">Protein phosphatase</keyword>
<keyword id="KW-1185">Reference proteome</keyword>
<keyword id="KW-0677">Repeat</keyword>
<keyword id="KW-0732">Signal</keyword>
<keyword id="KW-0812">Transmembrane</keyword>
<keyword id="KW-1133">Transmembrane helix</keyword>
<reference key="1">
    <citation type="journal article" date="2002" name="EMBO J.">
        <title>VE-PTP and VE-cadherin ectodomains interact to facilitate regulation of phosphorylation and cell contacts.</title>
        <authorList>
            <person name="Nawroth R."/>
            <person name="Poell G."/>
            <person name="Ranft A."/>
            <person name="Kloep S."/>
            <person name="Samulowitz U."/>
            <person name="Fachinger G."/>
            <person name="Golding M."/>
            <person name="Shima D.T."/>
            <person name="Deutsch U."/>
            <person name="Vestweber D."/>
        </authorList>
    </citation>
    <scope>NUCLEOTIDE SEQUENCE [MRNA]</scope>
    <scope>FUNCTION</scope>
    <scope>INTERACTION WITH CDH5</scope>
    <scope>DOMAIN</scope>
    <scope>MUTAGENESIS OF ARG-1911</scope>
    <source>
        <strain>Swiss Webster / NIH</strain>
    </source>
</reference>
<reference key="2">
    <citation type="journal article" date="2005" name="EMBO J.">
        <authorList>
            <person name="Nawroth R."/>
            <person name="Poell G."/>
            <person name="Ranft A."/>
            <person name="Kloep S."/>
            <person name="Samulowitz U."/>
            <person name="Fachinger G."/>
            <person name="Golding M."/>
            <person name="Shima D.T."/>
            <person name="Deutsch U."/>
            <person name="Vestweber D."/>
        </authorList>
    </citation>
    <scope>ERRATUM OF PUBMED:12234928</scope>
</reference>
<reference key="3">
    <citation type="journal article" date="2005" name="Science">
        <title>The transcriptional landscape of the mammalian genome.</title>
        <authorList>
            <person name="Carninci P."/>
            <person name="Kasukawa T."/>
            <person name="Katayama S."/>
            <person name="Gough J."/>
            <person name="Frith M.C."/>
            <person name="Maeda N."/>
            <person name="Oyama R."/>
            <person name="Ravasi T."/>
            <person name="Lenhard B."/>
            <person name="Wells C."/>
            <person name="Kodzius R."/>
            <person name="Shimokawa K."/>
            <person name="Bajic V.B."/>
            <person name="Brenner S.E."/>
            <person name="Batalov S."/>
            <person name="Forrest A.R."/>
            <person name="Zavolan M."/>
            <person name="Davis M.J."/>
            <person name="Wilming L.G."/>
            <person name="Aidinis V."/>
            <person name="Allen J.E."/>
            <person name="Ambesi-Impiombato A."/>
            <person name="Apweiler R."/>
            <person name="Aturaliya R.N."/>
            <person name="Bailey T.L."/>
            <person name="Bansal M."/>
            <person name="Baxter L."/>
            <person name="Beisel K.W."/>
            <person name="Bersano T."/>
            <person name="Bono H."/>
            <person name="Chalk A.M."/>
            <person name="Chiu K.P."/>
            <person name="Choudhary V."/>
            <person name="Christoffels A."/>
            <person name="Clutterbuck D.R."/>
            <person name="Crowe M.L."/>
            <person name="Dalla E."/>
            <person name="Dalrymple B.P."/>
            <person name="de Bono B."/>
            <person name="Della Gatta G."/>
            <person name="di Bernardo D."/>
            <person name="Down T."/>
            <person name="Engstrom P."/>
            <person name="Fagiolini M."/>
            <person name="Faulkner G."/>
            <person name="Fletcher C.F."/>
            <person name="Fukushima T."/>
            <person name="Furuno M."/>
            <person name="Futaki S."/>
            <person name="Gariboldi M."/>
            <person name="Georgii-Hemming P."/>
            <person name="Gingeras T.R."/>
            <person name="Gojobori T."/>
            <person name="Green R.E."/>
            <person name="Gustincich S."/>
            <person name="Harbers M."/>
            <person name="Hayashi Y."/>
            <person name="Hensch T.K."/>
            <person name="Hirokawa N."/>
            <person name="Hill D."/>
            <person name="Huminiecki L."/>
            <person name="Iacono M."/>
            <person name="Ikeo K."/>
            <person name="Iwama A."/>
            <person name="Ishikawa T."/>
            <person name="Jakt M."/>
            <person name="Kanapin A."/>
            <person name="Katoh M."/>
            <person name="Kawasawa Y."/>
            <person name="Kelso J."/>
            <person name="Kitamura H."/>
            <person name="Kitano H."/>
            <person name="Kollias G."/>
            <person name="Krishnan S.P."/>
            <person name="Kruger A."/>
            <person name="Kummerfeld S.K."/>
            <person name="Kurochkin I.V."/>
            <person name="Lareau L.F."/>
            <person name="Lazarevic D."/>
            <person name="Lipovich L."/>
            <person name="Liu J."/>
            <person name="Liuni S."/>
            <person name="McWilliam S."/>
            <person name="Madan Babu M."/>
            <person name="Madera M."/>
            <person name="Marchionni L."/>
            <person name="Matsuda H."/>
            <person name="Matsuzawa S."/>
            <person name="Miki H."/>
            <person name="Mignone F."/>
            <person name="Miyake S."/>
            <person name="Morris K."/>
            <person name="Mottagui-Tabar S."/>
            <person name="Mulder N."/>
            <person name="Nakano N."/>
            <person name="Nakauchi H."/>
            <person name="Ng P."/>
            <person name="Nilsson R."/>
            <person name="Nishiguchi S."/>
            <person name="Nishikawa S."/>
            <person name="Nori F."/>
            <person name="Ohara O."/>
            <person name="Okazaki Y."/>
            <person name="Orlando V."/>
            <person name="Pang K.C."/>
            <person name="Pavan W.J."/>
            <person name="Pavesi G."/>
            <person name="Pesole G."/>
            <person name="Petrovsky N."/>
            <person name="Piazza S."/>
            <person name="Reed J."/>
            <person name="Reid J.F."/>
            <person name="Ring B.Z."/>
            <person name="Ringwald M."/>
            <person name="Rost B."/>
            <person name="Ruan Y."/>
            <person name="Salzberg S.L."/>
            <person name="Sandelin A."/>
            <person name="Schneider C."/>
            <person name="Schoenbach C."/>
            <person name="Sekiguchi K."/>
            <person name="Semple C.A."/>
            <person name="Seno S."/>
            <person name="Sessa L."/>
            <person name="Sheng Y."/>
            <person name="Shibata Y."/>
            <person name="Shimada H."/>
            <person name="Shimada K."/>
            <person name="Silva D."/>
            <person name="Sinclair B."/>
            <person name="Sperling S."/>
            <person name="Stupka E."/>
            <person name="Sugiura K."/>
            <person name="Sultana R."/>
            <person name="Takenaka Y."/>
            <person name="Taki K."/>
            <person name="Tammoja K."/>
            <person name="Tan S.L."/>
            <person name="Tang S."/>
            <person name="Taylor M.S."/>
            <person name="Tegner J."/>
            <person name="Teichmann S.A."/>
            <person name="Ueda H.R."/>
            <person name="van Nimwegen E."/>
            <person name="Verardo R."/>
            <person name="Wei C.L."/>
            <person name="Yagi K."/>
            <person name="Yamanishi H."/>
            <person name="Zabarovsky E."/>
            <person name="Zhu S."/>
            <person name="Zimmer A."/>
            <person name="Hide W."/>
            <person name="Bult C."/>
            <person name="Grimmond S.M."/>
            <person name="Teasdale R.D."/>
            <person name="Liu E.T."/>
            <person name="Brusic V."/>
            <person name="Quackenbush J."/>
            <person name="Wahlestedt C."/>
            <person name="Mattick J.S."/>
            <person name="Hume D.A."/>
            <person name="Kai C."/>
            <person name="Sasaki D."/>
            <person name="Tomaru Y."/>
            <person name="Fukuda S."/>
            <person name="Kanamori-Katayama M."/>
            <person name="Suzuki M."/>
            <person name="Aoki J."/>
            <person name="Arakawa T."/>
            <person name="Iida J."/>
            <person name="Imamura K."/>
            <person name="Itoh M."/>
            <person name="Kato T."/>
            <person name="Kawaji H."/>
            <person name="Kawagashira N."/>
            <person name="Kawashima T."/>
            <person name="Kojima M."/>
            <person name="Kondo S."/>
            <person name="Konno H."/>
            <person name="Nakano K."/>
            <person name="Ninomiya N."/>
            <person name="Nishio T."/>
            <person name="Okada M."/>
            <person name="Plessy C."/>
            <person name="Shibata K."/>
            <person name="Shiraki T."/>
            <person name="Suzuki S."/>
            <person name="Tagami M."/>
            <person name="Waki K."/>
            <person name="Watahiki A."/>
            <person name="Okamura-Oho Y."/>
            <person name="Suzuki H."/>
            <person name="Kawai J."/>
            <person name="Hayashizaki Y."/>
        </authorList>
    </citation>
    <scope>NUCLEOTIDE SEQUENCE [LARGE SCALE MRNA]</scope>
    <source>
        <strain>C57BL/6J</strain>
        <tissue>Brain</tissue>
    </source>
</reference>
<reference key="4">
    <citation type="submission" date="2005-07" db="EMBL/GenBank/DDBJ databases">
        <authorList>
            <person name="Mural R.J."/>
            <person name="Adams M.D."/>
            <person name="Myers E.W."/>
            <person name="Smith H.O."/>
            <person name="Venter J.C."/>
        </authorList>
    </citation>
    <scope>NUCLEOTIDE SEQUENCE [LARGE SCALE GENOMIC DNA]</scope>
</reference>
<reference key="5">
    <citation type="journal article" date="2004" name="Genome Res.">
        <title>The status, quality, and expansion of the NIH full-length cDNA project: the Mammalian Gene Collection (MGC).</title>
        <authorList>
            <consortium name="The MGC Project Team"/>
        </authorList>
    </citation>
    <scope>NUCLEOTIDE SEQUENCE [LARGE SCALE MRNA]</scope>
    <source>
        <tissue>Brain</tissue>
    </source>
</reference>
<reference key="6">
    <citation type="journal article" date="1999" name="Oncogene">
        <title>Functional interaction of vascular endothelial-protein-tyrosine phosphatase with the angiopoietin receptor Tie-2.</title>
        <authorList>
            <person name="Fachinger G."/>
            <person name="Deutsch U."/>
            <person name="Risau W."/>
        </authorList>
    </citation>
    <scope>FUNCTION</scope>
    <scope>INTERACTION WITH TEK</scope>
    <scope>TISSUE SPECIFICITY</scope>
    <scope>DEVELOPMENTAL STAGE</scope>
</reference>
<reference key="7">
    <citation type="journal article" date="2001" name="J. Cell Biol.">
        <title>Overlapping functions of the cell adhesion molecules Nr-CAM and L1 in cerebellar granule cell development.</title>
        <authorList>
            <person name="Sakurai T."/>
            <person name="Lustig M."/>
            <person name="Babiarz J."/>
            <person name="Furley A.J."/>
            <person name="Tait S."/>
            <person name="Brophy P.J."/>
            <person name="Brown S.A."/>
            <person name="Brown L.Y."/>
            <person name="Mason C.A."/>
            <person name="Grumet M."/>
        </authorList>
    </citation>
    <scope>SUBUNIT</scope>
</reference>
<reference key="8">
    <citation type="journal article" date="2006" name="Blood">
        <title>Vascular endothelial cell-specific phosphotyrosine phosphatase (VE-PTP) activity is required for blood vessel development.</title>
        <authorList>
            <person name="Bauemer S."/>
            <person name="Keller L."/>
            <person name="Holtmann A."/>
            <person name="Funke R."/>
            <person name="August B."/>
            <person name="Gamp A."/>
            <person name="Wolburg H."/>
            <person name="Wolburg-Buchholz K."/>
            <person name="Deutsch U."/>
            <person name="Vestweber D."/>
        </authorList>
    </citation>
    <scope>FUNCTION</scope>
    <scope>TISSUE SPECIFICITY</scope>
    <scope>DEVELOPMENTAL STAGE</scope>
</reference>
<reference key="9">
    <citation type="journal article" date="2007" name="Proc. Natl. Acad. Sci. U.S.A.">
        <title>Vascular endothelial tyrosine phosphatase (VE-PTP)-null mice undergo vasculogenesis but die embryonically because of defects in angiogenesis.</title>
        <authorList>
            <person name="Dominguez M.G."/>
            <person name="Hughes V.C."/>
            <person name="Pan L."/>
            <person name="Simmons M."/>
            <person name="Daly C."/>
            <person name="Anderson K."/>
            <person name="Noguera-Troise I."/>
            <person name="Murphy A.J."/>
            <person name="Valenzuela D.M."/>
            <person name="Davis S."/>
            <person name="Thurston G."/>
            <person name="Yancopoulos G.D."/>
            <person name="Gale N.W."/>
        </authorList>
    </citation>
    <scope>FUNCTION</scope>
    <scope>DISRUPTION PHENOTYPE</scope>
    <scope>TISSUE SPECIFICITY</scope>
    <scope>DEVELOPMENTAL STAGE</scope>
</reference>
<reference key="10">
    <citation type="journal article" date="2008" name="J. Exp. Med.">
        <title>VE-PTP maintains the endothelial barrier via plakoglobin and becomes dissociated from VE-cadherin by leukocytes and by VEGF.</title>
        <authorList>
            <person name="Nottebaum A.F."/>
            <person name="Cagna G."/>
            <person name="Winderlich M."/>
            <person name="Gamp A.C."/>
            <person name="Linnepe R."/>
            <person name="Polaschegg C."/>
            <person name="Filippova K."/>
            <person name="Lyck R."/>
            <person name="Engelhardt B."/>
            <person name="Kamenyeva O."/>
            <person name="Bixel M.G."/>
            <person name="Butz S."/>
            <person name="Vestweber D."/>
        </authorList>
    </citation>
    <scope>FUNCTION</scope>
    <scope>INTERACTION WITH CDH5</scope>
</reference>
<reference key="11">
    <citation type="journal article" date="2009" name="J. Cell Biol.">
        <title>VE-PTP controls blood vessel development by balancing Tie-2 activity.</title>
        <authorList>
            <person name="Winderlich M."/>
            <person name="Keller L."/>
            <person name="Cagna G."/>
            <person name="Broermann A."/>
            <person name="Kamenyeva O."/>
            <person name="Kiefer F."/>
            <person name="Deutsch U."/>
            <person name="Nottebaum A.F."/>
            <person name="Vestweber D."/>
        </authorList>
    </citation>
    <scope>FUNCTION</scope>
    <scope>INTERACTION WITH TEK</scope>
</reference>
<reference key="12">
    <citation type="journal article" date="2010" name="Cell">
        <title>A tissue-specific atlas of mouse protein phosphorylation and expression.</title>
        <authorList>
            <person name="Huttlin E.L."/>
            <person name="Jedrychowski M.P."/>
            <person name="Elias J.E."/>
            <person name="Goswami T."/>
            <person name="Rad R."/>
            <person name="Beausoleil S.A."/>
            <person name="Villen J."/>
            <person name="Haas W."/>
            <person name="Sowa M.E."/>
            <person name="Gygi S.P."/>
        </authorList>
    </citation>
    <scope>IDENTIFICATION BY MASS SPECTROMETRY [LARGE SCALE ANALYSIS]</scope>
    <source>
        <tissue>Lung</tissue>
    </source>
</reference>
<reference key="13">
    <citation type="journal article" date="2010" name="Genes Cells">
        <title>Tyrosine phosphorylation of R3 subtype receptor-type protein tyrosine phosphatases and their complex formations with Grb2 or Fyn.</title>
        <authorList>
            <person name="Murata Y."/>
            <person name="Mori M."/>
            <person name="Kotani T."/>
            <person name="Supriatna Y."/>
            <person name="Okazawa H."/>
            <person name="Kusakari S."/>
            <person name="Saito Y."/>
            <person name="Ohnishi H."/>
            <person name="Matozaki T."/>
        </authorList>
    </citation>
    <scope>INTERACTION WITH FYN AND GRB2</scope>
    <scope>PHOSPHORYLATION AT TYR-1982</scope>
    <scope>MUTAGENESIS OF TYR-1982</scope>
</reference>
<reference key="14">
    <citation type="journal article" date="2016" name="J. Bone Miner. Res.">
        <title>IRS-1 Functions as a Molecular Scaffold to Coordinate IGF-I/IGFBP-2 Signaling During Osteoblast Differentiation.</title>
        <authorList>
            <person name="Xi G."/>
            <person name="Shen X."/>
            <person name="Rosen C.J."/>
            <person name="Clemmons D.R."/>
        </authorList>
    </citation>
    <scope>FUNCTION</scope>
    <scope>INTERACTION WITH IGFBP2</scope>
</reference>
<organism>
    <name type="scientific">Mus musculus</name>
    <name type="common">Mouse</name>
    <dbReference type="NCBI Taxonomy" id="10090"/>
    <lineage>
        <taxon>Eukaryota</taxon>
        <taxon>Metazoa</taxon>
        <taxon>Chordata</taxon>
        <taxon>Craniata</taxon>
        <taxon>Vertebrata</taxon>
        <taxon>Euteleostomi</taxon>
        <taxon>Mammalia</taxon>
        <taxon>Eutheria</taxon>
        <taxon>Euarchontoglires</taxon>
        <taxon>Glires</taxon>
        <taxon>Rodentia</taxon>
        <taxon>Myomorpha</taxon>
        <taxon>Muroidea</taxon>
        <taxon>Muridae</taxon>
        <taxon>Murinae</taxon>
        <taxon>Mus</taxon>
        <taxon>Mus</taxon>
    </lineage>
</organism>